<organism>
    <name type="scientific">Caldivirga maquilingensis (strain ATCC 700844 / DSM 13496 / JCM 10307 / IC-167)</name>
    <dbReference type="NCBI Taxonomy" id="397948"/>
    <lineage>
        <taxon>Archaea</taxon>
        <taxon>Thermoproteota</taxon>
        <taxon>Thermoprotei</taxon>
        <taxon>Thermoproteales</taxon>
        <taxon>Thermoproteaceae</taxon>
        <taxon>Caldivirga</taxon>
    </lineage>
</organism>
<keyword id="KW-0004">4Fe-4S</keyword>
<keyword id="KW-0028">Amino-acid biosynthesis</keyword>
<keyword id="KW-0100">Branched-chain amino acid biosynthesis</keyword>
<keyword id="KW-0408">Iron</keyword>
<keyword id="KW-0411">Iron-sulfur</keyword>
<keyword id="KW-0432">Leucine biosynthesis</keyword>
<keyword id="KW-0456">Lyase</keyword>
<keyword id="KW-0479">Metal-binding</keyword>
<keyword id="KW-1185">Reference proteome</keyword>
<dbReference type="EC" id="4.2.1.33" evidence="1"/>
<dbReference type="EMBL" id="CP000852">
    <property type="protein sequence ID" value="ABW01994.1"/>
    <property type="molecule type" value="Genomic_DNA"/>
</dbReference>
<dbReference type="RefSeq" id="WP_012186213.1">
    <property type="nucleotide sequence ID" value="NC_009954.1"/>
</dbReference>
<dbReference type="SMR" id="A8MDY8"/>
<dbReference type="STRING" id="397948.Cmaq_1167"/>
<dbReference type="GeneID" id="5709430"/>
<dbReference type="KEGG" id="cma:Cmaq_1167"/>
<dbReference type="eggNOG" id="arCOG01698">
    <property type="taxonomic scope" value="Archaea"/>
</dbReference>
<dbReference type="HOGENOM" id="CLU_006714_3_4_2"/>
<dbReference type="OrthoDB" id="255at2157"/>
<dbReference type="UniPathway" id="UPA00048">
    <property type="reaction ID" value="UER00071"/>
</dbReference>
<dbReference type="Proteomes" id="UP000001137">
    <property type="component" value="Chromosome"/>
</dbReference>
<dbReference type="GO" id="GO:0003861">
    <property type="term" value="F:3-isopropylmalate dehydratase activity"/>
    <property type="evidence" value="ECO:0007669"/>
    <property type="project" value="UniProtKB-UniRule"/>
</dbReference>
<dbReference type="GO" id="GO:0051539">
    <property type="term" value="F:4 iron, 4 sulfur cluster binding"/>
    <property type="evidence" value="ECO:0007669"/>
    <property type="project" value="UniProtKB-KW"/>
</dbReference>
<dbReference type="GO" id="GO:0046872">
    <property type="term" value="F:metal ion binding"/>
    <property type="evidence" value="ECO:0007669"/>
    <property type="project" value="UniProtKB-KW"/>
</dbReference>
<dbReference type="GO" id="GO:0009098">
    <property type="term" value="P:L-leucine biosynthetic process"/>
    <property type="evidence" value="ECO:0007669"/>
    <property type="project" value="UniProtKB-UniRule"/>
</dbReference>
<dbReference type="Gene3D" id="3.30.499.10">
    <property type="entry name" value="Aconitase, domain 3"/>
    <property type="match status" value="2"/>
</dbReference>
<dbReference type="HAMAP" id="MF_01027">
    <property type="entry name" value="LeuC_type2"/>
    <property type="match status" value="1"/>
</dbReference>
<dbReference type="InterPro" id="IPR015931">
    <property type="entry name" value="Acnase/IPM_dHydase_lsu_aba_1/3"/>
</dbReference>
<dbReference type="InterPro" id="IPR001030">
    <property type="entry name" value="Acoase/IPM_deHydtase_lsu_aba"/>
</dbReference>
<dbReference type="InterPro" id="IPR018136">
    <property type="entry name" value="Aconitase_4Fe-4S_BS"/>
</dbReference>
<dbReference type="InterPro" id="IPR036008">
    <property type="entry name" value="Aconitase_4Fe-4S_dom"/>
</dbReference>
<dbReference type="InterPro" id="IPR011826">
    <property type="entry name" value="HAcnase/IPMdehydase_lsu_prok"/>
</dbReference>
<dbReference type="InterPro" id="IPR006251">
    <property type="entry name" value="Homoacnase/IPMdehydase_lsu"/>
</dbReference>
<dbReference type="InterPro" id="IPR050067">
    <property type="entry name" value="IPM_dehydratase_rel_enz"/>
</dbReference>
<dbReference type="NCBIfam" id="TIGR01343">
    <property type="entry name" value="hacA_fam"/>
    <property type="match status" value="1"/>
</dbReference>
<dbReference type="NCBIfam" id="TIGR02086">
    <property type="entry name" value="IPMI_arch"/>
    <property type="match status" value="1"/>
</dbReference>
<dbReference type="NCBIfam" id="NF001614">
    <property type="entry name" value="PRK00402.1"/>
    <property type="match status" value="1"/>
</dbReference>
<dbReference type="PANTHER" id="PTHR43822:SF2">
    <property type="entry name" value="HOMOACONITASE, MITOCHONDRIAL"/>
    <property type="match status" value="1"/>
</dbReference>
<dbReference type="PANTHER" id="PTHR43822">
    <property type="entry name" value="HOMOACONITASE, MITOCHONDRIAL-RELATED"/>
    <property type="match status" value="1"/>
</dbReference>
<dbReference type="Pfam" id="PF00330">
    <property type="entry name" value="Aconitase"/>
    <property type="match status" value="1"/>
</dbReference>
<dbReference type="PRINTS" id="PR00415">
    <property type="entry name" value="ACONITASE"/>
</dbReference>
<dbReference type="SUPFAM" id="SSF53732">
    <property type="entry name" value="Aconitase iron-sulfur domain"/>
    <property type="match status" value="1"/>
</dbReference>
<dbReference type="PROSITE" id="PS00450">
    <property type="entry name" value="ACONITASE_1"/>
    <property type="match status" value="1"/>
</dbReference>
<dbReference type="PROSITE" id="PS01244">
    <property type="entry name" value="ACONITASE_2"/>
    <property type="match status" value="1"/>
</dbReference>
<name>LEUC_CALMQ</name>
<gene>
    <name evidence="1" type="primary">leuC</name>
    <name type="ordered locus">Cmaq_1167</name>
</gene>
<proteinExistence type="inferred from homology"/>
<sequence>MGLTLTEKILSKAAGRQVSPGDVTEITVDLAAFHDLTGHHVVEVMENIGAVKVWDLDRFVIAFDHLAPPPNDRAAEIQVKLRKFAKSINVRNFHDVGDGILHQLLLEKYALPGQVVMAADSHTTTVGAVGAFAQGMGASDMAAILMTGKTWLMIPEPFLIRLINEPAPGVYGKDVALHILSVFKAEGLNGKSVELQVEKPKAFPMDYRATVSNMGVEFGADAAIFIPDEETVSYLSRSRGINVKPITPDPDAKYVDEYTIELNKLEPLVAAPHSVDNVKPVSEVEGIEVDYVFIGSCTNGRLSDLEAAARILKNGKVKARCIVIPASRDLFTKALDAGYVETLTKAGCVVTYGTCGPCLGGHFGVIGPGETAVSTGSRNFKGRMGSPEGKVYLANAATAAATALEGRLTDPRKYL</sequence>
<reference key="1">
    <citation type="submission" date="2007-10" db="EMBL/GenBank/DDBJ databases">
        <title>Complete sequence of Caldivirga maquilingensis IC-167.</title>
        <authorList>
            <consortium name="US DOE Joint Genome Institute"/>
            <person name="Copeland A."/>
            <person name="Lucas S."/>
            <person name="Lapidus A."/>
            <person name="Barry K."/>
            <person name="Glavina del Rio T."/>
            <person name="Dalin E."/>
            <person name="Tice H."/>
            <person name="Pitluck S."/>
            <person name="Saunders E."/>
            <person name="Brettin T."/>
            <person name="Bruce D."/>
            <person name="Detter J.C."/>
            <person name="Han C."/>
            <person name="Schmutz J."/>
            <person name="Larimer F."/>
            <person name="Land M."/>
            <person name="Hauser L."/>
            <person name="Kyrpides N."/>
            <person name="Ivanova N."/>
            <person name="Biddle J.F."/>
            <person name="Zhang Z."/>
            <person name="Fitz-Gibbon S.T."/>
            <person name="Lowe T.M."/>
            <person name="Saltikov C."/>
            <person name="House C.H."/>
            <person name="Richardson P."/>
        </authorList>
    </citation>
    <scope>NUCLEOTIDE SEQUENCE [LARGE SCALE GENOMIC DNA]</scope>
    <source>
        <strain>ATCC 700844 / DSM 13496 / JCM 10307 / IC-167</strain>
    </source>
</reference>
<evidence type="ECO:0000255" key="1">
    <source>
        <dbReference type="HAMAP-Rule" id="MF_01027"/>
    </source>
</evidence>
<comment type="function">
    <text evidence="1">Catalyzes the isomerization between 2-isopropylmalate and 3-isopropylmalate, via the formation of 2-isopropylmaleate.</text>
</comment>
<comment type="catalytic activity">
    <reaction evidence="1">
        <text>(2R,3S)-3-isopropylmalate = (2S)-2-isopropylmalate</text>
        <dbReference type="Rhea" id="RHEA:32287"/>
        <dbReference type="ChEBI" id="CHEBI:1178"/>
        <dbReference type="ChEBI" id="CHEBI:35121"/>
        <dbReference type="EC" id="4.2.1.33"/>
    </reaction>
</comment>
<comment type="cofactor">
    <cofactor evidence="1">
        <name>[4Fe-4S] cluster</name>
        <dbReference type="ChEBI" id="CHEBI:49883"/>
    </cofactor>
    <text evidence="1">Binds 1 [4Fe-4S] cluster per subunit.</text>
</comment>
<comment type="pathway">
    <text evidence="1">Amino-acid biosynthesis; L-leucine biosynthesis; L-leucine from 3-methyl-2-oxobutanoate: step 2/4.</text>
</comment>
<comment type="subunit">
    <text evidence="1">Heterodimer of LeuC and LeuD.</text>
</comment>
<comment type="similarity">
    <text evidence="1">Belongs to the aconitase/IPM isomerase family. LeuC type 2 subfamily.</text>
</comment>
<protein>
    <recommendedName>
        <fullName evidence="1">3-isopropylmalate dehydratase large subunit</fullName>
        <ecNumber evidence="1">4.2.1.33</ecNumber>
    </recommendedName>
    <alternativeName>
        <fullName evidence="1">Alpha-IPM isomerase</fullName>
        <shortName evidence="1">IPMI</shortName>
    </alternativeName>
    <alternativeName>
        <fullName evidence="1">Isopropylmalate isomerase</fullName>
    </alternativeName>
</protein>
<feature type="chain" id="PRO_1000084234" description="3-isopropylmalate dehydratase large subunit">
    <location>
        <begin position="1"/>
        <end position="415"/>
    </location>
</feature>
<feature type="binding site" evidence="1">
    <location>
        <position position="297"/>
    </location>
    <ligand>
        <name>[4Fe-4S] cluster</name>
        <dbReference type="ChEBI" id="CHEBI:49883"/>
    </ligand>
</feature>
<feature type="binding site" evidence="1">
    <location>
        <position position="355"/>
    </location>
    <ligand>
        <name>[4Fe-4S] cluster</name>
        <dbReference type="ChEBI" id="CHEBI:49883"/>
    </ligand>
</feature>
<feature type="binding site" evidence="1">
    <location>
        <position position="358"/>
    </location>
    <ligand>
        <name>[4Fe-4S] cluster</name>
        <dbReference type="ChEBI" id="CHEBI:49883"/>
    </ligand>
</feature>
<accession>A8MDY8</accession>